<keyword id="KW-0028">Amino-acid biosynthesis</keyword>
<keyword id="KW-0100">Branched-chain amino acid biosynthesis</keyword>
<keyword id="KW-0432">Leucine biosynthesis</keyword>
<keyword id="KW-0456">Lyase</keyword>
<keyword id="KW-1185">Reference proteome</keyword>
<reference key="1">
    <citation type="journal article" date="2011" name="Stand. Genomic Sci.">
        <title>Complete genome sequence of Parvibaculum lavamentivorans type strain (DS-1(T)).</title>
        <authorList>
            <person name="Schleheck D."/>
            <person name="Weiss M."/>
            <person name="Pitluck S."/>
            <person name="Bruce D."/>
            <person name="Land M.L."/>
            <person name="Han S."/>
            <person name="Saunders E."/>
            <person name="Tapia R."/>
            <person name="Detter C."/>
            <person name="Brettin T."/>
            <person name="Han J."/>
            <person name="Woyke T."/>
            <person name="Goodwin L."/>
            <person name="Pennacchio L."/>
            <person name="Nolan M."/>
            <person name="Cook A.M."/>
            <person name="Kjelleberg S."/>
            <person name="Thomas T."/>
        </authorList>
    </citation>
    <scope>NUCLEOTIDE SEQUENCE [LARGE SCALE GENOMIC DNA]</scope>
    <source>
        <strain>DS-1 / DSM 13023 / NCIMB 13966</strain>
    </source>
</reference>
<organism>
    <name type="scientific">Parvibaculum lavamentivorans (strain DS-1 / DSM 13023 / NCIMB 13966)</name>
    <dbReference type="NCBI Taxonomy" id="402881"/>
    <lineage>
        <taxon>Bacteria</taxon>
        <taxon>Pseudomonadati</taxon>
        <taxon>Pseudomonadota</taxon>
        <taxon>Alphaproteobacteria</taxon>
        <taxon>Hyphomicrobiales</taxon>
        <taxon>Parvibaculaceae</taxon>
        <taxon>Parvibaculum</taxon>
    </lineage>
</organism>
<protein>
    <recommendedName>
        <fullName evidence="1">3-isopropylmalate dehydratase small subunit</fullName>
        <ecNumber evidence="1">4.2.1.33</ecNumber>
    </recommendedName>
    <alternativeName>
        <fullName evidence="1">Alpha-IPM isomerase</fullName>
        <shortName evidence="1">IPMI</shortName>
    </alternativeName>
    <alternativeName>
        <fullName evidence="1">Isopropylmalate isomerase</fullName>
    </alternativeName>
</protein>
<accession>A7HT11</accession>
<dbReference type="EC" id="4.2.1.33" evidence="1"/>
<dbReference type="EMBL" id="CP000774">
    <property type="protein sequence ID" value="ABS63044.1"/>
    <property type="molecule type" value="Genomic_DNA"/>
</dbReference>
<dbReference type="RefSeq" id="WP_012110321.1">
    <property type="nucleotide sequence ID" value="NC_009719.1"/>
</dbReference>
<dbReference type="SMR" id="A7HT11"/>
<dbReference type="STRING" id="402881.Plav_1424"/>
<dbReference type="KEGG" id="pla:Plav_1424"/>
<dbReference type="eggNOG" id="COG0066">
    <property type="taxonomic scope" value="Bacteria"/>
</dbReference>
<dbReference type="HOGENOM" id="CLU_081378_0_3_5"/>
<dbReference type="OrthoDB" id="9777465at2"/>
<dbReference type="UniPathway" id="UPA00048">
    <property type="reaction ID" value="UER00071"/>
</dbReference>
<dbReference type="Proteomes" id="UP000006377">
    <property type="component" value="Chromosome"/>
</dbReference>
<dbReference type="GO" id="GO:0009316">
    <property type="term" value="C:3-isopropylmalate dehydratase complex"/>
    <property type="evidence" value="ECO:0007669"/>
    <property type="project" value="InterPro"/>
</dbReference>
<dbReference type="GO" id="GO:0003861">
    <property type="term" value="F:3-isopropylmalate dehydratase activity"/>
    <property type="evidence" value="ECO:0007669"/>
    <property type="project" value="UniProtKB-UniRule"/>
</dbReference>
<dbReference type="GO" id="GO:0009098">
    <property type="term" value="P:L-leucine biosynthetic process"/>
    <property type="evidence" value="ECO:0007669"/>
    <property type="project" value="UniProtKB-UniRule"/>
</dbReference>
<dbReference type="CDD" id="cd01577">
    <property type="entry name" value="IPMI_Swivel"/>
    <property type="match status" value="1"/>
</dbReference>
<dbReference type="FunFam" id="3.20.19.10:FF:000003">
    <property type="entry name" value="3-isopropylmalate dehydratase small subunit"/>
    <property type="match status" value="1"/>
</dbReference>
<dbReference type="Gene3D" id="3.20.19.10">
    <property type="entry name" value="Aconitase, domain 4"/>
    <property type="match status" value="1"/>
</dbReference>
<dbReference type="HAMAP" id="MF_01031">
    <property type="entry name" value="LeuD_type1"/>
    <property type="match status" value="1"/>
</dbReference>
<dbReference type="InterPro" id="IPR004431">
    <property type="entry name" value="3-IsopropMal_deHydase_ssu"/>
</dbReference>
<dbReference type="InterPro" id="IPR015928">
    <property type="entry name" value="Aconitase/3IPM_dehydase_swvl"/>
</dbReference>
<dbReference type="InterPro" id="IPR000573">
    <property type="entry name" value="AconitaseA/IPMdHydase_ssu_swvl"/>
</dbReference>
<dbReference type="InterPro" id="IPR033940">
    <property type="entry name" value="IPMI_Swivel"/>
</dbReference>
<dbReference type="InterPro" id="IPR050075">
    <property type="entry name" value="LeuD"/>
</dbReference>
<dbReference type="NCBIfam" id="TIGR00171">
    <property type="entry name" value="leuD"/>
    <property type="match status" value="1"/>
</dbReference>
<dbReference type="NCBIfam" id="NF002458">
    <property type="entry name" value="PRK01641.1"/>
    <property type="match status" value="1"/>
</dbReference>
<dbReference type="PANTHER" id="PTHR43345:SF5">
    <property type="entry name" value="3-ISOPROPYLMALATE DEHYDRATASE SMALL SUBUNIT"/>
    <property type="match status" value="1"/>
</dbReference>
<dbReference type="PANTHER" id="PTHR43345">
    <property type="entry name" value="3-ISOPROPYLMALATE DEHYDRATASE SMALL SUBUNIT 2-RELATED-RELATED"/>
    <property type="match status" value="1"/>
</dbReference>
<dbReference type="Pfam" id="PF00694">
    <property type="entry name" value="Aconitase_C"/>
    <property type="match status" value="1"/>
</dbReference>
<dbReference type="SUPFAM" id="SSF52016">
    <property type="entry name" value="LeuD/IlvD-like"/>
    <property type="match status" value="1"/>
</dbReference>
<sequence length="201" mass="22474">MDKFNKLTGVAAPLPIINVDTDMIIPKQFLKTIKRTGLGKNLFDEMRYDDNGNEIPDFVLNKPAYRNAQILVTGENFGCGSSREHAPWALLDFGIRCVIAPSFADIFYNNCFQNGILPIVLPQEEVDKLMDDAERGSNAIITVDLEAQEIRGPDGGVIKFDVDPFRKHCMLNGLDGVGLTLQKEAEIATFEKKLEETQPWL</sequence>
<feature type="chain" id="PRO_1000072958" description="3-isopropylmalate dehydratase small subunit">
    <location>
        <begin position="1"/>
        <end position="201"/>
    </location>
</feature>
<comment type="function">
    <text evidence="1">Catalyzes the isomerization between 2-isopropylmalate and 3-isopropylmalate, via the formation of 2-isopropylmaleate.</text>
</comment>
<comment type="catalytic activity">
    <reaction evidence="1">
        <text>(2R,3S)-3-isopropylmalate = (2S)-2-isopropylmalate</text>
        <dbReference type="Rhea" id="RHEA:32287"/>
        <dbReference type="ChEBI" id="CHEBI:1178"/>
        <dbReference type="ChEBI" id="CHEBI:35121"/>
        <dbReference type="EC" id="4.2.1.33"/>
    </reaction>
</comment>
<comment type="pathway">
    <text evidence="1">Amino-acid biosynthesis; L-leucine biosynthesis; L-leucine from 3-methyl-2-oxobutanoate: step 2/4.</text>
</comment>
<comment type="subunit">
    <text evidence="1">Heterodimer of LeuC and LeuD.</text>
</comment>
<comment type="similarity">
    <text evidence="1">Belongs to the LeuD family. LeuD type 1 subfamily.</text>
</comment>
<evidence type="ECO:0000255" key="1">
    <source>
        <dbReference type="HAMAP-Rule" id="MF_01031"/>
    </source>
</evidence>
<gene>
    <name evidence="1" type="primary">leuD</name>
    <name type="ordered locus">Plav_1424</name>
</gene>
<name>LEUD_PARL1</name>
<proteinExistence type="inferred from homology"/>